<feature type="signal peptide" evidence="3">
    <location>
        <begin position="1"/>
        <end position="25"/>
    </location>
</feature>
<feature type="chain" id="PRO_0000394596" description="Probable alpha-L-arabinofuranosidase A">
    <location>
        <begin position="26"/>
        <end position="628"/>
    </location>
</feature>
<feature type="glycosylation site" description="N-linked (GlcNAc...) asparagine" evidence="2">
    <location>
        <position position="36"/>
    </location>
</feature>
<feature type="glycosylation site" description="N-linked (GlcNAc...) asparagine" evidence="2">
    <location>
        <position position="51"/>
    </location>
</feature>
<feature type="glycosylation site" description="N-linked (GlcNAc...) asparagine" evidence="2">
    <location>
        <position position="74"/>
    </location>
</feature>
<feature type="glycosylation site" description="N-linked (GlcNAc...) asparagine" evidence="2">
    <location>
        <position position="152"/>
    </location>
</feature>
<feature type="glycosylation site" description="N-linked (GlcNAc...) asparagine" evidence="2">
    <location>
        <position position="171"/>
    </location>
</feature>
<feature type="glycosylation site" description="N-linked (GlcNAc...) asparagine" evidence="2">
    <location>
        <position position="260"/>
    </location>
</feature>
<feature type="glycosylation site" description="N-linked (GlcNAc...) asparagine" evidence="2">
    <location>
        <position position="359"/>
    </location>
</feature>
<feature type="glycosylation site" description="N-linked (GlcNAc...) asparagine" evidence="2">
    <location>
        <position position="493"/>
    </location>
</feature>
<protein>
    <recommendedName>
        <fullName>Probable alpha-L-arabinofuranosidase A</fullName>
        <shortName>ABF A</shortName>
        <shortName>Arabinosidase A</shortName>
        <ecNumber>3.2.1.55</ecNumber>
    </recommendedName>
</protein>
<name>ABFA_ASPAW</name>
<proteinExistence type="evidence at protein level"/>
<evidence type="ECO:0000250" key="1"/>
<evidence type="ECO:0000255" key="2"/>
<evidence type="ECO:0000269" key="3">
    <source>
    </source>
</evidence>
<evidence type="ECO:0000305" key="4"/>
<keyword id="KW-0119">Carbohydrate metabolism</keyword>
<keyword id="KW-0903">Direct protein sequencing</keyword>
<keyword id="KW-0325">Glycoprotein</keyword>
<keyword id="KW-0326">Glycosidase</keyword>
<keyword id="KW-0378">Hydrolase</keyword>
<keyword id="KW-0624">Polysaccharide degradation</keyword>
<keyword id="KW-0964">Secreted</keyword>
<keyword id="KW-0732">Signal</keyword>
<comment type="function">
    <text evidence="1">Alpha-L-arabinofuranosidase involved in the degradation of arabinoxylan, a major component of plant hemicellulose. Acts only on small linear 1,5-alpha-linked L-arabinofuranosyl oligosaccharides (By similarity).</text>
</comment>
<comment type="catalytic activity">
    <reaction>
        <text>Hydrolysis of terminal non-reducing alpha-L-arabinofuranoside residues in alpha-L-arabinosides.</text>
        <dbReference type="EC" id="3.2.1.55"/>
    </reaction>
</comment>
<comment type="pathway">
    <text>Glycan metabolism; L-arabinan degradation.</text>
</comment>
<comment type="subcellular location">
    <subcellularLocation>
        <location evidence="1">Secreted</location>
    </subcellularLocation>
</comment>
<comment type="similarity">
    <text evidence="4">Belongs to the glycosyl hydrolase 51 family.</text>
</comment>
<sequence>MVAFSALSGVSALSLLLCLVQHAHGVSLKVSTQGGNSSSPILYGFMFEDINHSGDGGIYGQLLQNPGLQGTTPNLTAWAAVGDATIAIDGDSPLTSAIPSTIKLDVADDATGAVGLTNEGYWGIPVDGSEFQSSFWIKGDYSGDITVRLVGNYTGTEYGSATITHTSTADNFTQASVKFPTTKAPDGNVLYELTVDGSVAAGSSLNFGYLTLFGETYKSRENGLKPQLANVLADMKGSFLRFPGGNNLEGNSAENRWKWNETIGDLWDRPGREGTWTYYNTDGLGLHEYFYWCEDLGLVPVLGVWDGFALESGGNTPITGDALTPYIDDVLNELEYILGDTSTTYGAWRAANGQEEPWNLTMVEIGNEDMLGGGCESYAERFTAFYDAIHAAYPDLILIASTSEADCLPESMPEGSWVDYHDYSTPDGLVGQFNYFDNLYRSVPYFIGEYSRWEIDWPNMKGSVSEAVFMIGFERNSDVVKMAAYAPLLQLVNSTQWTPDLIGYTQSPDDIFLSTSYYVQEMFSRNRGDTIKEVTSDSDFGPLYWVASSAGDSYYVKLANYGSETQDLTVSIPGTSTGKLTVLADNDPDAYNSDTQTLVTPSESTVQASNGTFTFSLPAWAVAVLAAN</sequence>
<organism>
    <name type="scientific">Aspergillus awamori</name>
    <name type="common">Black koji mold</name>
    <dbReference type="NCBI Taxonomy" id="105351"/>
    <lineage>
        <taxon>Eukaryota</taxon>
        <taxon>Fungi</taxon>
        <taxon>Dikarya</taxon>
        <taxon>Ascomycota</taxon>
        <taxon>Pezizomycotina</taxon>
        <taxon>Eurotiomycetes</taxon>
        <taxon>Eurotiomycetidae</taxon>
        <taxon>Eurotiales</taxon>
        <taxon>Aspergillaceae</taxon>
        <taxon>Aspergillus</taxon>
    </lineage>
</organism>
<dbReference type="EC" id="3.2.1.55"/>
<dbReference type="EMBL" id="AB046702">
    <property type="protein sequence ID" value="BAB21568.2"/>
    <property type="molecule type" value="Genomic_DNA"/>
</dbReference>
<dbReference type="SMR" id="Q96X54"/>
<dbReference type="CAZy" id="GH51">
    <property type="family name" value="Glycoside Hydrolase Family 51"/>
</dbReference>
<dbReference type="GlyCosmos" id="Q96X54">
    <property type="glycosylation" value="8 sites, No reported glycans"/>
</dbReference>
<dbReference type="UniPathway" id="UPA00667"/>
<dbReference type="GO" id="GO:0005576">
    <property type="term" value="C:extracellular region"/>
    <property type="evidence" value="ECO:0000250"/>
    <property type="project" value="UniProtKB"/>
</dbReference>
<dbReference type="GO" id="GO:0046556">
    <property type="term" value="F:alpha-L-arabinofuranosidase activity"/>
    <property type="evidence" value="ECO:0000250"/>
    <property type="project" value="UniProtKB"/>
</dbReference>
<dbReference type="GO" id="GO:0031222">
    <property type="term" value="P:arabinan catabolic process"/>
    <property type="evidence" value="ECO:0007669"/>
    <property type="project" value="UniProtKB-UniPathway"/>
</dbReference>
<dbReference type="GO" id="GO:0019566">
    <property type="term" value="P:arabinose metabolic process"/>
    <property type="evidence" value="ECO:0000250"/>
    <property type="project" value="UniProtKB"/>
</dbReference>
<dbReference type="GO" id="GO:0046373">
    <property type="term" value="P:L-arabinose metabolic process"/>
    <property type="evidence" value="ECO:0007669"/>
    <property type="project" value="InterPro"/>
</dbReference>
<dbReference type="FunFam" id="2.60.40.1180:FF:000036">
    <property type="entry name" value="Probable alpha-L-arabinofuranosidase A"/>
    <property type="match status" value="1"/>
</dbReference>
<dbReference type="FunFam" id="3.20.20.80:FF:000092">
    <property type="entry name" value="Probable alpha-L-arabinofuranosidase A"/>
    <property type="match status" value="1"/>
</dbReference>
<dbReference type="Gene3D" id="3.20.20.80">
    <property type="entry name" value="Glycosidases"/>
    <property type="match status" value="1"/>
</dbReference>
<dbReference type="Gene3D" id="2.60.40.1180">
    <property type="entry name" value="Golgi alpha-mannosidase II"/>
    <property type="match status" value="1"/>
</dbReference>
<dbReference type="InterPro" id="IPR010720">
    <property type="entry name" value="Alpha-L-AF_C"/>
</dbReference>
<dbReference type="InterPro" id="IPR055235">
    <property type="entry name" value="ASD1_cat"/>
</dbReference>
<dbReference type="InterPro" id="IPR013780">
    <property type="entry name" value="Glyco_hydro_b"/>
</dbReference>
<dbReference type="InterPro" id="IPR017853">
    <property type="entry name" value="Glycoside_hydrolase_SF"/>
</dbReference>
<dbReference type="InterPro" id="IPR051563">
    <property type="entry name" value="Glycosyl_Hydrolase_51"/>
</dbReference>
<dbReference type="PANTHER" id="PTHR31776">
    <property type="entry name" value="ALPHA-L-ARABINOFURANOSIDASE 1"/>
    <property type="match status" value="1"/>
</dbReference>
<dbReference type="PANTHER" id="PTHR31776:SF0">
    <property type="entry name" value="ALPHA-L-ARABINOFURANOSIDASE 1"/>
    <property type="match status" value="1"/>
</dbReference>
<dbReference type="Pfam" id="PF06964">
    <property type="entry name" value="Alpha-L-AF_C"/>
    <property type="match status" value="1"/>
</dbReference>
<dbReference type="Pfam" id="PF22848">
    <property type="entry name" value="ASD1_dom"/>
    <property type="match status" value="1"/>
</dbReference>
<dbReference type="SMART" id="SM00813">
    <property type="entry name" value="Alpha-L-AF_C"/>
    <property type="match status" value="1"/>
</dbReference>
<dbReference type="SUPFAM" id="SSF51445">
    <property type="entry name" value="(Trans)glycosidases"/>
    <property type="match status" value="1"/>
</dbReference>
<dbReference type="SUPFAM" id="SSF51011">
    <property type="entry name" value="Glycosyl hydrolase domain"/>
    <property type="match status" value="1"/>
</dbReference>
<reference key="1">
    <citation type="journal article" date="2003" name="J. Biosci. Bioeng.">
        <title>Role of two alpha-L-arabinofuranosidases in arabinoxylan degradation and characteristics of the encoding genes from shochu koji molds, Aspergillus kawachii and Aspergillus awamori.</title>
        <authorList>
            <person name="Koseki T."/>
            <person name="Okuda M."/>
            <person name="Sudoh S."/>
            <person name="Kizaki Y."/>
            <person name="Iwano K."/>
            <person name="Aramaki I."/>
            <person name="Matsuzawa H."/>
        </authorList>
    </citation>
    <scope>NUCLEOTIDE SEQUENCE [GENOMIC DNA]</scope>
    <scope>PROTEIN SEQUENCE OF 26-43</scope>
    <source>
        <strain>ATCC 38854 / NBRC 4033</strain>
    </source>
</reference>
<gene>
    <name type="primary">abfA</name>
</gene>
<accession>Q96X54</accession>